<organism>
    <name type="scientific">Xenopus laevis</name>
    <name type="common">African clawed frog</name>
    <dbReference type="NCBI Taxonomy" id="8355"/>
    <lineage>
        <taxon>Eukaryota</taxon>
        <taxon>Metazoa</taxon>
        <taxon>Chordata</taxon>
        <taxon>Craniata</taxon>
        <taxon>Vertebrata</taxon>
        <taxon>Euteleostomi</taxon>
        <taxon>Amphibia</taxon>
        <taxon>Batrachia</taxon>
        <taxon>Anura</taxon>
        <taxon>Pipoidea</taxon>
        <taxon>Pipidae</taxon>
        <taxon>Xenopodinae</taxon>
        <taxon>Xenopus</taxon>
        <taxon>Xenopus</taxon>
    </lineage>
</organism>
<feature type="chain" id="PRO_0000320638" description="E3 ubiquitin-protein ligase RNFT1">
    <location>
        <begin position="1"/>
        <end position="416"/>
    </location>
</feature>
<feature type="transmembrane region" description="Helical" evidence="2">
    <location>
        <begin position="146"/>
        <end position="166"/>
    </location>
</feature>
<feature type="transmembrane region" description="Helical" evidence="2">
    <location>
        <begin position="184"/>
        <end position="204"/>
    </location>
</feature>
<feature type="transmembrane region" description="Helical" evidence="2">
    <location>
        <begin position="214"/>
        <end position="234"/>
    </location>
</feature>
<feature type="transmembrane region" description="Helical" evidence="2">
    <location>
        <begin position="237"/>
        <end position="257"/>
    </location>
</feature>
<feature type="transmembrane region" description="Helical" evidence="2">
    <location>
        <begin position="265"/>
        <end position="287"/>
    </location>
</feature>
<feature type="transmembrane region" description="Helical" evidence="2">
    <location>
        <begin position="302"/>
        <end position="322"/>
    </location>
</feature>
<feature type="zinc finger region" description="RING-type" evidence="3">
    <location>
        <begin position="356"/>
        <end position="394"/>
    </location>
</feature>
<feature type="region of interest" description="Disordered" evidence="4">
    <location>
        <begin position="1"/>
        <end position="50"/>
    </location>
</feature>
<feature type="region of interest" description="Disordered" evidence="4">
    <location>
        <begin position="68"/>
        <end position="117"/>
    </location>
</feature>
<feature type="region of interest" description="Required for ubiquitin ligase activity and for protection against ER stress-induced cell death" evidence="1">
    <location>
        <begin position="349"/>
        <end position="400"/>
    </location>
</feature>
<feature type="compositionally biased region" description="Basic and acidic residues" evidence="4">
    <location>
        <begin position="7"/>
        <end position="19"/>
    </location>
</feature>
<feature type="compositionally biased region" description="Polar residues" evidence="4">
    <location>
        <begin position="20"/>
        <end position="45"/>
    </location>
</feature>
<feature type="compositionally biased region" description="Polar residues" evidence="4">
    <location>
        <begin position="68"/>
        <end position="80"/>
    </location>
</feature>
<feature type="compositionally biased region" description="Basic residues" evidence="4">
    <location>
        <begin position="81"/>
        <end position="100"/>
    </location>
</feature>
<feature type="sequence conflict" description="In Ref. 1; AAH68853." evidence="5" ref="1">
    <original>R</original>
    <variation>G</variation>
    <location>
        <position position="86"/>
    </location>
</feature>
<name>RNFT1_XENLA</name>
<evidence type="ECO:0000250" key="1">
    <source>
        <dbReference type="UniProtKB" id="Q5M7Z0"/>
    </source>
</evidence>
<evidence type="ECO:0000255" key="2"/>
<evidence type="ECO:0000255" key="3">
    <source>
        <dbReference type="PROSITE-ProRule" id="PRU00175"/>
    </source>
</evidence>
<evidence type="ECO:0000256" key="4">
    <source>
        <dbReference type="SAM" id="MobiDB-lite"/>
    </source>
</evidence>
<evidence type="ECO:0000305" key="5"/>
<gene>
    <name type="primary">rnft1</name>
</gene>
<keyword id="KW-0256">Endoplasmic reticulum</keyword>
<keyword id="KW-0472">Membrane</keyword>
<keyword id="KW-0479">Metal-binding</keyword>
<keyword id="KW-1185">Reference proteome</keyword>
<keyword id="KW-0808">Transferase</keyword>
<keyword id="KW-0812">Transmembrane</keyword>
<keyword id="KW-1133">Transmembrane helix</keyword>
<keyword id="KW-0833">Ubl conjugation pathway</keyword>
<keyword id="KW-0862">Zinc</keyword>
<keyword id="KW-0863">Zinc-finger</keyword>
<dbReference type="EC" id="2.3.2.27" evidence="1"/>
<dbReference type="EMBL" id="BC068853">
    <property type="protein sequence ID" value="AAH68853.1"/>
    <property type="molecule type" value="mRNA"/>
</dbReference>
<dbReference type="EMBL" id="BC077617">
    <property type="protein sequence ID" value="AAH77617.1"/>
    <property type="status" value="ALT_INIT"/>
    <property type="molecule type" value="mRNA"/>
</dbReference>
<dbReference type="RefSeq" id="NP_001084648.1">
    <property type="nucleotide sequence ID" value="NM_001091179.1"/>
</dbReference>
<dbReference type="RefSeq" id="XP_018100454.1">
    <property type="nucleotide sequence ID" value="XM_018244965.1"/>
</dbReference>
<dbReference type="SMR" id="Q6NTV1"/>
<dbReference type="DNASU" id="414607"/>
<dbReference type="GeneID" id="414607"/>
<dbReference type="KEGG" id="xla:414607"/>
<dbReference type="AGR" id="Xenbase:XB-GENE-984040"/>
<dbReference type="CTD" id="414607"/>
<dbReference type="Xenbase" id="XB-GENE-984040">
    <property type="gene designation" value="rnft1.L"/>
</dbReference>
<dbReference type="OMA" id="GCIHSRL"/>
<dbReference type="OrthoDB" id="9049620at2759"/>
<dbReference type="UniPathway" id="UPA00143"/>
<dbReference type="Proteomes" id="UP000186698">
    <property type="component" value="Chromosome 2L"/>
</dbReference>
<dbReference type="Bgee" id="414607">
    <property type="expression patterns" value="Expressed in egg cell and 19 other cell types or tissues"/>
</dbReference>
<dbReference type="GO" id="GO:0005783">
    <property type="term" value="C:endoplasmic reticulum"/>
    <property type="evidence" value="ECO:0000318"/>
    <property type="project" value="GO_Central"/>
</dbReference>
<dbReference type="GO" id="GO:0005789">
    <property type="term" value="C:endoplasmic reticulum membrane"/>
    <property type="evidence" value="ECO:0007669"/>
    <property type="project" value="UniProtKB-SubCell"/>
</dbReference>
<dbReference type="GO" id="GO:0061630">
    <property type="term" value="F:ubiquitin protein ligase activity"/>
    <property type="evidence" value="ECO:0000318"/>
    <property type="project" value="GO_Central"/>
</dbReference>
<dbReference type="GO" id="GO:0008270">
    <property type="term" value="F:zinc ion binding"/>
    <property type="evidence" value="ECO:0007669"/>
    <property type="project" value="UniProtKB-KW"/>
</dbReference>
<dbReference type="GO" id="GO:1904294">
    <property type="term" value="P:positive regulation of ERAD pathway"/>
    <property type="evidence" value="ECO:0000318"/>
    <property type="project" value="GO_Central"/>
</dbReference>
<dbReference type="GO" id="GO:0016567">
    <property type="term" value="P:protein ubiquitination"/>
    <property type="evidence" value="ECO:0007669"/>
    <property type="project" value="UniProtKB-UniPathway"/>
</dbReference>
<dbReference type="CDD" id="cd16741">
    <property type="entry name" value="RING-HC_RNFT1"/>
    <property type="match status" value="1"/>
</dbReference>
<dbReference type="Gene3D" id="3.30.40.10">
    <property type="entry name" value="Zinc/RING finger domain, C3HC4 (zinc finger)"/>
    <property type="match status" value="1"/>
</dbReference>
<dbReference type="InterPro" id="IPR044235">
    <property type="entry name" value="RNFT1/2"/>
</dbReference>
<dbReference type="InterPro" id="IPR001841">
    <property type="entry name" value="Znf_RING"/>
</dbReference>
<dbReference type="InterPro" id="IPR013083">
    <property type="entry name" value="Znf_RING/FYVE/PHD"/>
</dbReference>
<dbReference type="InterPro" id="IPR017907">
    <property type="entry name" value="Znf_RING_CS"/>
</dbReference>
<dbReference type="PANTHER" id="PTHR15860:SF1">
    <property type="entry name" value="E3 UBIQUITIN-PROTEIN LIGASE RNFT1"/>
    <property type="match status" value="1"/>
</dbReference>
<dbReference type="PANTHER" id="PTHR15860">
    <property type="entry name" value="UNCHARACTERIZED RING FINGER-CONTAINING PROTEIN"/>
    <property type="match status" value="1"/>
</dbReference>
<dbReference type="Pfam" id="PF13639">
    <property type="entry name" value="zf-RING_2"/>
    <property type="match status" value="1"/>
</dbReference>
<dbReference type="SMART" id="SM00184">
    <property type="entry name" value="RING"/>
    <property type="match status" value="1"/>
</dbReference>
<dbReference type="SUPFAM" id="SSF57850">
    <property type="entry name" value="RING/U-box"/>
    <property type="match status" value="1"/>
</dbReference>
<dbReference type="PROSITE" id="PS00518">
    <property type="entry name" value="ZF_RING_1"/>
    <property type="match status" value="1"/>
</dbReference>
<dbReference type="PROSITE" id="PS50089">
    <property type="entry name" value="ZF_RING_2"/>
    <property type="match status" value="1"/>
</dbReference>
<protein>
    <recommendedName>
        <fullName evidence="5">E3 ubiquitin-protein ligase RNFT1</fullName>
        <ecNumber evidence="1">2.3.2.27</ecNumber>
    </recommendedName>
    <alternativeName>
        <fullName>RING finger and transmembrane domain-containing protein 1</fullName>
    </alternativeName>
</protein>
<proteinExistence type="evidence at transcript level"/>
<sequence>MKHRPVHERQSSTESKNLKETTQLIMQSSSDHTHHQLGSNDSPSACMSLPVPQLSAEGSCTVGDVTVDLSSQDSQHVARSNSRRVRPSTHGRSPSRHGHTHSHDASGPEDANDDSREQSNSISEVFHLYKWLEKSFPYILIFSAKLVVQHITGISVGIGLLTTFLYANKCIVNQVFLRDKCSKLQCLWVLVFLLFSSFLLYYTFSSQALYYSLVFMNPSLGPLHFFDALWVVGITDFIGKFFFMGLKCIILLVPSFVMSHKSKGYWYMALEELAQCYCTLVSTPVWFRYLIDYGNLDSGAEWHFGILLALLYLILKILIIFGQRKTSSDCLRLFLSQPNYGTTATKRQCSEADGMCAICQAEFTKPIALICQHVFCEECISSWFNKEKTCPLCRTLISNHSHKWKDGATSLQLRIF</sequence>
<reference key="1">
    <citation type="submission" date="2004-04" db="EMBL/GenBank/DDBJ databases">
        <authorList>
            <consortium name="NIH - Xenopus Gene Collection (XGC) project"/>
        </authorList>
    </citation>
    <scope>NUCLEOTIDE SEQUENCE [LARGE SCALE MRNA]</scope>
    <source>
        <tissue>Embryo</tissue>
        <tissue>Oocyte</tissue>
    </source>
</reference>
<comment type="function">
    <text evidence="1">E3 ubiquitin-protein ligase that acts in the endoplasmic reticulum (ER)-associated degradation (ERAD) pathway, which targets misfolded proteins that accumulate in the endoplasmic reticulum (ER) for ubiquitination and subsequent proteasome-mediated degradation. Protects cells from ER stress-induced apoptosis.</text>
</comment>
<comment type="catalytic activity">
    <reaction evidence="1">
        <text>S-ubiquitinyl-[E2 ubiquitin-conjugating enzyme]-L-cysteine + [acceptor protein]-L-lysine = [E2 ubiquitin-conjugating enzyme]-L-cysteine + N(6)-ubiquitinyl-[acceptor protein]-L-lysine.</text>
        <dbReference type="EC" id="2.3.2.27"/>
    </reaction>
</comment>
<comment type="pathway">
    <text evidence="1">Protein modification; protein ubiquitination.</text>
</comment>
<comment type="subcellular location">
    <subcellularLocation>
        <location evidence="1">Endoplasmic reticulum membrane</location>
        <topology evidence="1">Multi-pass membrane protein</topology>
    </subcellularLocation>
</comment>
<comment type="sequence caution" evidence="5">
    <conflict type="erroneous initiation">
        <sequence resource="EMBL-CDS" id="AAH77617"/>
    </conflict>
</comment>
<accession>Q6NTV1</accession>
<accession>Q6DDF3</accession>